<gene>
    <name evidence="1" type="primary">lipA</name>
    <name type="ordered locus">GSU0380</name>
</gene>
<dbReference type="EC" id="2.8.1.8" evidence="1"/>
<dbReference type="EMBL" id="AE017180">
    <property type="protein sequence ID" value="AAR33712.1"/>
    <property type="molecule type" value="Genomic_DNA"/>
</dbReference>
<dbReference type="RefSeq" id="NP_951439.1">
    <property type="nucleotide sequence ID" value="NC_002939.5"/>
</dbReference>
<dbReference type="RefSeq" id="WP_010941048.1">
    <property type="nucleotide sequence ID" value="NC_002939.5"/>
</dbReference>
<dbReference type="SMR" id="P61196"/>
<dbReference type="FunCoup" id="P61196">
    <property type="interactions" value="566"/>
</dbReference>
<dbReference type="STRING" id="243231.GSU0380"/>
<dbReference type="EnsemblBacteria" id="AAR33712">
    <property type="protein sequence ID" value="AAR33712"/>
    <property type="gene ID" value="GSU0380"/>
</dbReference>
<dbReference type="KEGG" id="gsu:GSU0380"/>
<dbReference type="PATRIC" id="fig|243231.5.peg.378"/>
<dbReference type="eggNOG" id="COG0320">
    <property type="taxonomic scope" value="Bacteria"/>
</dbReference>
<dbReference type="HOGENOM" id="CLU_033144_2_1_7"/>
<dbReference type="InParanoid" id="P61196"/>
<dbReference type="OrthoDB" id="9787898at2"/>
<dbReference type="UniPathway" id="UPA00538">
    <property type="reaction ID" value="UER00593"/>
</dbReference>
<dbReference type="Proteomes" id="UP000000577">
    <property type="component" value="Chromosome"/>
</dbReference>
<dbReference type="GO" id="GO:0005737">
    <property type="term" value="C:cytoplasm"/>
    <property type="evidence" value="ECO:0007669"/>
    <property type="project" value="UniProtKB-SubCell"/>
</dbReference>
<dbReference type="GO" id="GO:0051539">
    <property type="term" value="F:4 iron, 4 sulfur cluster binding"/>
    <property type="evidence" value="ECO:0007669"/>
    <property type="project" value="UniProtKB-UniRule"/>
</dbReference>
<dbReference type="GO" id="GO:0016992">
    <property type="term" value="F:lipoate synthase activity"/>
    <property type="evidence" value="ECO:0007669"/>
    <property type="project" value="UniProtKB-UniRule"/>
</dbReference>
<dbReference type="GO" id="GO:0046872">
    <property type="term" value="F:metal ion binding"/>
    <property type="evidence" value="ECO:0007669"/>
    <property type="project" value="UniProtKB-KW"/>
</dbReference>
<dbReference type="FunFam" id="3.20.20.70:FF:000186">
    <property type="entry name" value="Lipoyl synthase"/>
    <property type="match status" value="1"/>
</dbReference>
<dbReference type="Gene3D" id="3.20.20.70">
    <property type="entry name" value="Aldolase class I"/>
    <property type="match status" value="1"/>
</dbReference>
<dbReference type="HAMAP" id="MF_00206">
    <property type="entry name" value="Lipoyl_synth"/>
    <property type="match status" value="1"/>
</dbReference>
<dbReference type="InterPro" id="IPR013785">
    <property type="entry name" value="Aldolase_TIM"/>
</dbReference>
<dbReference type="InterPro" id="IPR006638">
    <property type="entry name" value="Elp3/MiaA/NifB-like_rSAM"/>
</dbReference>
<dbReference type="InterPro" id="IPR003698">
    <property type="entry name" value="Lipoyl_synth"/>
</dbReference>
<dbReference type="InterPro" id="IPR007197">
    <property type="entry name" value="rSAM"/>
</dbReference>
<dbReference type="NCBIfam" id="TIGR00510">
    <property type="entry name" value="lipA"/>
    <property type="match status" value="1"/>
</dbReference>
<dbReference type="NCBIfam" id="NF004019">
    <property type="entry name" value="PRK05481.1"/>
    <property type="match status" value="1"/>
</dbReference>
<dbReference type="NCBIfam" id="NF009544">
    <property type="entry name" value="PRK12928.1"/>
    <property type="match status" value="1"/>
</dbReference>
<dbReference type="PANTHER" id="PTHR10949">
    <property type="entry name" value="LIPOYL SYNTHASE"/>
    <property type="match status" value="1"/>
</dbReference>
<dbReference type="PANTHER" id="PTHR10949:SF0">
    <property type="entry name" value="LIPOYL SYNTHASE, MITOCHONDRIAL"/>
    <property type="match status" value="1"/>
</dbReference>
<dbReference type="Pfam" id="PF04055">
    <property type="entry name" value="Radical_SAM"/>
    <property type="match status" value="1"/>
</dbReference>
<dbReference type="PIRSF" id="PIRSF005963">
    <property type="entry name" value="Lipoyl_synth"/>
    <property type="match status" value="1"/>
</dbReference>
<dbReference type="SFLD" id="SFLDF00271">
    <property type="entry name" value="lipoyl_synthase"/>
    <property type="match status" value="1"/>
</dbReference>
<dbReference type="SFLD" id="SFLDG01058">
    <property type="entry name" value="lipoyl_synthase_like"/>
    <property type="match status" value="1"/>
</dbReference>
<dbReference type="SMART" id="SM00729">
    <property type="entry name" value="Elp3"/>
    <property type="match status" value="1"/>
</dbReference>
<dbReference type="SUPFAM" id="SSF102114">
    <property type="entry name" value="Radical SAM enzymes"/>
    <property type="match status" value="1"/>
</dbReference>
<dbReference type="PROSITE" id="PS51918">
    <property type="entry name" value="RADICAL_SAM"/>
    <property type="match status" value="1"/>
</dbReference>
<organism>
    <name type="scientific">Geobacter sulfurreducens (strain ATCC 51573 / DSM 12127 / PCA)</name>
    <dbReference type="NCBI Taxonomy" id="243231"/>
    <lineage>
        <taxon>Bacteria</taxon>
        <taxon>Pseudomonadati</taxon>
        <taxon>Thermodesulfobacteriota</taxon>
        <taxon>Desulfuromonadia</taxon>
        <taxon>Geobacterales</taxon>
        <taxon>Geobacteraceae</taxon>
        <taxon>Geobacter</taxon>
    </lineage>
</organism>
<proteinExistence type="inferred from homology"/>
<accession>P61196</accession>
<comment type="function">
    <text evidence="1">Catalyzes the radical-mediated insertion of two sulfur atoms into the C-6 and C-8 positions of the octanoyl moiety bound to the lipoyl domains of lipoate-dependent enzymes, thereby converting the octanoylated domains into lipoylated derivatives.</text>
</comment>
<comment type="catalytic activity">
    <reaction evidence="1">
        <text>[[Fe-S] cluster scaffold protein carrying a second [4Fe-4S](2+) cluster] + N(6)-octanoyl-L-lysyl-[protein] + 2 oxidized [2Fe-2S]-[ferredoxin] + 2 S-adenosyl-L-methionine + 4 H(+) = [[Fe-S] cluster scaffold protein] + N(6)-[(R)-dihydrolipoyl]-L-lysyl-[protein] + 4 Fe(3+) + 2 hydrogen sulfide + 2 5'-deoxyadenosine + 2 L-methionine + 2 reduced [2Fe-2S]-[ferredoxin]</text>
        <dbReference type="Rhea" id="RHEA:16585"/>
        <dbReference type="Rhea" id="RHEA-COMP:9928"/>
        <dbReference type="Rhea" id="RHEA-COMP:10000"/>
        <dbReference type="Rhea" id="RHEA-COMP:10001"/>
        <dbReference type="Rhea" id="RHEA-COMP:10475"/>
        <dbReference type="Rhea" id="RHEA-COMP:14568"/>
        <dbReference type="Rhea" id="RHEA-COMP:14569"/>
        <dbReference type="ChEBI" id="CHEBI:15378"/>
        <dbReference type="ChEBI" id="CHEBI:17319"/>
        <dbReference type="ChEBI" id="CHEBI:29034"/>
        <dbReference type="ChEBI" id="CHEBI:29919"/>
        <dbReference type="ChEBI" id="CHEBI:33722"/>
        <dbReference type="ChEBI" id="CHEBI:33737"/>
        <dbReference type="ChEBI" id="CHEBI:33738"/>
        <dbReference type="ChEBI" id="CHEBI:57844"/>
        <dbReference type="ChEBI" id="CHEBI:59789"/>
        <dbReference type="ChEBI" id="CHEBI:78809"/>
        <dbReference type="ChEBI" id="CHEBI:83100"/>
        <dbReference type="EC" id="2.8.1.8"/>
    </reaction>
</comment>
<comment type="cofactor">
    <cofactor evidence="1">
        <name>[4Fe-4S] cluster</name>
        <dbReference type="ChEBI" id="CHEBI:49883"/>
    </cofactor>
    <text evidence="1">Binds 2 [4Fe-4S] clusters per subunit. One cluster is coordinated with 3 cysteines and an exchangeable S-adenosyl-L-methionine.</text>
</comment>
<comment type="pathway">
    <text evidence="1">Protein modification; protein lipoylation via endogenous pathway; protein N(6)-(lipoyl)lysine from octanoyl-[acyl-carrier-protein]: step 2/2.</text>
</comment>
<comment type="subcellular location">
    <subcellularLocation>
        <location evidence="1">Cytoplasm</location>
    </subcellularLocation>
</comment>
<comment type="similarity">
    <text evidence="1">Belongs to the radical SAM superfamily. Lipoyl synthase family.</text>
</comment>
<keyword id="KW-0004">4Fe-4S</keyword>
<keyword id="KW-0963">Cytoplasm</keyword>
<keyword id="KW-0408">Iron</keyword>
<keyword id="KW-0411">Iron-sulfur</keyword>
<keyword id="KW-0479">Metal-binding</keyword>
<keyword id="KW-1185">Reference proteome</keyword>
<keyword id="KW-0949">S-adenosyl-L-methionine</keyword>
<keyword id="KW-0808">Transferase</keyword>
<reference key="1">
    <citation type="journal article" date="2003" name="Science">
        <title>Genome of Geobacter sulfurreducens: metal reduction in subsurface environments.</title>
        <authorList>
            <person name="Methe B.A."/>
            <person name="Nelson K.E."/>
            <person name="Eisen J.A."/>
            <person name="Paulsen I.T."/>
            <person name="Nelson W.C."/>
            <person name="Heidelberg J.F."/>
            <person name="Wu D."/>
            <person name="Wu M."/>
            <person name="Ward N.L."/>
            <person name="Beanan M.J."/>
            <person name="Dodson R.J."/>
            <person name="Madupu R."/>
            <person name="Brinkac L.M."/>
            <person name="Daugherty S.C."/>
            <person name="DeBoy R.T."/>
            <person name="Durkin A.S."/>
            <person name="Gwinn M.L."/>
            <person name="Kolonay J.F."/>
            <person name="Sullivan S.A."/>
            <person name="Haft D.H."/>
            <person name="Selengut J."/>
            <person name="Davidsen T.M."/>
            <person name="Zafar N."/>
            <person name="White O."/>
            <person name="Tran B."/>
            <person name="Romero C."/>
            <person name="Forberger H.A."/>
            <person name="Weidman J.F."/>
            <person name="Khouri H.M."/>
            <person name="Feldblyum T.V."/>
            <person name="Utterback T.R."/>
            <person name="Van Aken S.E."/>
            <person name="Lovley D.R."/>
            <person name="Fraser C.M."/>
        </authorList>
    </citation>
    <scope>NUCLEOTIDE SEQUENCE [LARGE SCALE GENOMIC DNA]</scope>
    <source>
        <strain>ATCC 51573 / DSM 12127 / PCA</strain>
    </source>
</reference>
<sequence>MNIHRKPEWLRKKINPAAHGAMDELLGELRLHTVCREARCPNITECFRERQATFLILGAECTRLCSFCNVTKGEPLPPDPDEPARVAQAVVRLSLAHVVITSPTRDDLPDGGAGHYVATVATIGRVAPATVVELLIPDFLGSRAALADVVAAAPRIIGHNVETVPRLYAIRAGADYGRSLAVLRTLRELAPGCATKSGLMLGLGETEEEVLAVMADLRRVDCTYLSLGQYLAPSRFHHPVREFVLPETFDRLKELAEKMGFRHVESGPYVRSSYHAAGYGGGTRTDQPVASGCLSDQEGVSAQ</sequence>
<name>LIPA_GEOSL</name>
<protein>
    <recommendedName>
        <fullName evidence="1">Lipoyl synthase</fullName>
        <ecNumber evidence="1">2.8.1.8</ecNumber>
    </recommendedName>
    <alternativeName>
        <fullName evidence="1">Lip-syn</fullName>
        <shortName evidence="1">LS</shortName>
    </alternativeName>
    <alternativeName>
        <fullName evidence="1">Lipoate synthase</fullName>
    </alternativeName>
    <alternativeName>
        <fullName evidence="1">Lipoic acid synthase</fullName>
    </alternativeName>
    <alternativeName>
        <fullName evidence="1">Sulfur insertion protein LipA</fullName>
    </alternativeName>
</protein>
<evidence type="ECO:0000255" key="1">
    <source>
        <dbReference type="HAMAP-Rule" id="MF_00206"/>
    </source>
</evidence>
<evidence type="ECO:0000255" key="2">
    <source>
        <dbReference type="PROSITE-ProRule" id="PRU01266"/>
    </source>
</evidence>
<feature type="chain" id="PRO_0000102316" description="Lipoyl synthase">
    <location>
        <begin position="1"/>
        <end position="303"/>
    </location>
</feature>
<feature type="domain" description="Radical SAM core" evidence="2">
    <location>
        <begin position="47"/>
        <end position="262"/>
    </location>
</feature>
<feature type="binding site" evidence="1">
    <location>
        <position position="35"/>
    </location>
    <ligand>
        <name>[4Fe-4S] cluster</name>
        <dbReference type="ChEBI" id="CHEBI:49883"/>
        <label>1</label>
    </ligand>
</feature>
<feature type="binding site" evidence="1">
    <location>
        <position position="40"/>
    </location>
    <ligand>
        <name>[4Fe-4S] cluster</name>
        <dbReference type="ChEBI" id="CHEBI:49883"/>
        <label>1</label>
    </ligand>
</feature>
<feature type="binding site" evidence="1">
    <location>
        <position position="46"/>
    </location>
    <ligand>
        <name>[4Fe-4S] cluster</name>
        <dbReference type="ChEBI" id="CHEBI:49883"/>
        <label>1</label>
    </ligand>
</feature>
<feature type="binding site" evidence="1">
    <location>
        <position position="61"/>
    </location>
    <ligand>
        <name>[4Fe-4S] cluster</name>
        <dbReference type="ChEBI" id="CHEBI:49883"/>
        <label>2</label>
        <note>4Fe-4S-S-AdoMet</note>
    </ligand>
</feature>
<feature type="binding site" evidence="1">
    <location>
        <position position="65"/>
    </location>
    <ligand>
        <name>[4Fe-4S] cluster</name>
        <dbReference type="ChEBI" id="CHEBI:49883"/>
        <label>2</label>
        <note>4Fe-4S-S-AdoMet</note>
    </ligand>
</feature>
<feature type="binding site" evidence="1">
    <location>
        <position position="68"/>
    </location>
    <ligand>
        <name>[4Fe-4S] cluster</name>
        <dbReference type="ChEBI" id="CHEBI:49883"/>
        <label>2</label>
        <note>4Fe-4S-S-AdoMet</note>
    </ligand>
</feature>
<feature type="binding site" evidence="1">
    <location>
        <position position="273"/>
    </location>
    <ligand>
        <name>[4Fe-4S] cluster</name>
        <dbReference type="ChEBI" id="CHEBI:49883"/>
        <label>1</label>
    </ligand>
</feature>